<reference key="1">
    <citation type="journal article" date="2005" name="J. Bacteriol.">
        <title>Completion of the genome sequence of Brucella abortus and comparison to the highly similar genomes of Brucella melitensis and Brucella suis.</title>
        <authorList>
            <person name="Halling S.M."/>
            <person name="Peterson-Burch B.D."/>
            <person name="Bricker B.J."/>
            <person name="Zuerner R.L."/>
            <person name="Qing Z."/>
            <person name="Li L.-L."/>
            <person name="Kapur V."/>
            <person name="Alt D.P."/>
            <person name="Olsen S.C."/>
        </authorList>
    </citation>
    <scope>NUCLEOTIDE SEQUENCE [LARGE SCALE GENOMIC DNA]</scope>
    <source>
        <strain>9-941</strain>
    </source>
</reference>
<dbReference type="EMBL" id="AE017223">
    <property type="protein sequence ID" value="AAX74576.1"/>
    <property type="molecule type" value="Genomic_DNA"/>
</dbReference>
<dbReference type="RefSeq" id="WP_002964362.1">
    <property type="nucleotide sequence ID" value="NC_006932.1"/>
</dbReference>
<dbReference type="SMR" id="Q57CQ8"/>
<dbReference type="EnsemblBacteria" id="AAX74576">
    <property type="protein sequence ID" value="AAX74576"/>
    <property type="gene ID" value="BruAb1_1238"/>
</dbReference>
<dbReference type="GeneID" id="93016439"/>
<dbReference type="KEGG" id="bmb:BruAb1_1238"/>
<dbReference type="HOGENOM" id="CLU_044142_2_0_5"/>
<dbReference type="Proteomes" id="UP000000540">
    <property type="component" value="Chromosome I"/>
</dbReference>
<dbReference type="GO" id="GO:0022625">
    <property type="term" value="C:cytosolic large ribosomal subunit"/>
    <property type="evidence" value="ECO:0007669"/>
    <property type="project" value="TreeGrafter"/>
</dbReference>
<dbReference type="GO" id="GO:0019843">
    <property type="term" value="F:rRNA binding"/>
    <property type="evidence" value="ECO:0007669"/>
    <property type="project" value="UniProtKB-UniRule"/>
</dbReference>
<dbReference type="GO" id="GO:0003735">
    <property type="term" value="F:structural constituent of ribosome"/>
    <property type="evidence" value="ECO:0007669"/>
    <property type="project" value="InterPro"/>
</dbReference>
<dbReference type="GO" id="GO:0006412">
    <property type="term" value="P:translation"/>
    <property type="evidence" value="ECO:0007669"/>
    <property type="project" value="UniProtKB-UniRule"/>
</dbReference>
<dbReference type="FunFam" id="2.40.30.10:FF:000004">
    <property type="entry name" value="50S ribosomal protein L3"/>
    <property type="match status" value="1"/>
</dbReference>
<dbReference type="FunFam" id="3.30.160.810:FF:000001">
    <property type="entry name" value="50S ribosomal protein L3"/>
    <property type="match status" value="1"/>
</dbReference>
<dbReference type="Gene3D" id="3.30.160.810">
    <property type="match status" value="1"/>
</dbReference>
<dbReference type="Gene3D" id="2.40.30.10">
    <property type="entry name" value="Translation factors"/>
    <property type="match status" value="1"/>
</dbReference>
<dbReference type="HAMAP" id="MF_01325_B">
    <property type="entry name" value="Ribosomal_uL3_B"/>
    <property type="match status" value="1"/>
</dbReference>
<dbReference type="InterPro" id="IPR000597">
    <property type="entry name" value="Ribosomal_uL3"/>
</dbReference>
<dbReference type="InterPro" id="IPR019927">
    <property type="entry name" value="Ribosomal_uL3_bac/org-type"/>
</dbReference>
<dbReference type="InterPro" id="IPR019926">
    <property type="entry name" value="Ribosomal_uL3_CS"/>
</dbReference>
<dbReference type="InterPro" id="IPR009000">
    <property type="entry name" value="Transl_B-barrel_sf"/>
</dbReference>
<dbReference type="NCBIfam" id="TIGR03625">
    <property type="entry name" value="L3_bact"/>
    <property type="match status" value="1"/>
</dbReference>
<dbReference type="PANTHER" id="PTHR11229">
    <property type="entry name" value="50S RIBOSOMAL PROTEIN L3"/>
    <property type="match status" value="1"/>
</dbReference>
<dbReference type="PANTHER" id="PTHR11229:SF16">
    <property type="entry name" value="LARGE RIBOSOMAL SUBUNIT PROTEIN UL3C"/>
    <property type="match status" value="1"/>
</dbReference>
<dbReference type="Pfam" id="PF00297">
    <property type="entry name" value="Ribosomal_L3"/>
    <property type="match status" value="1"/>
</dbReference>
<dbReference type="SUPFAM" id="SSF50447">
    <property type="entry name" value="Translation proteins"/>
    <property type="match status" value="1"/>
</dbReference>
<dbReference type="PROSITE" id="PS00474">
    <property type="entry name" value="RIBOSOMAL_L3"/>
    <property type="match status" value="1"/>
</dbReference>
<comment type="function">
    <text evidence="1">One of the primary rRNA binding proteins, it binds directly near the 3'-end of the 23S rRNA, where it nucleates assembly of the 50S subunit.</text>
</comment>
<comment type="subunit">
    <text evidence="1">Part of the 50S ribosomal subunit. Forms a cluster with proteins L14 and L19.</text>
</comment>
<comment type="PTM">
    <text evidence="1">Methylated by PrmB.</text>
</comment>
<comment type="similarity">
    <text evidence="1">Belongs to the universal ribosomal protein uL3 family.</text>
</comment>
<name>RL3_BRUAB</name>
<organism>
    <name type="scientific">Brucella abortus biovar 1 (strain 9-941)</name>
    <dbReference type="NCBI Taxonomy" id="262698"/>
    <lineage>
        <taxon>Bacteria</taxon>
        <taxon>Pseudomonadati</taxon>
        <taxon>Pseudomonadota</taxon>
        <taxon>Alphaproteobacteria</taxon>
        <taxon>Hyphomicrobiales</taxon>
        <taxon>Brucellaceae</taxon>
        <taxon>Brucella/Ochrobactrum group</taxon>
        <taxon>Brucella</taxon>
    </lineage>
</organism>
<evidence type="ECO:0000255" key="1">
    <source>
        <dbReference type="HAMAP-Rule" id="MF_01325"/>
    </source>
</evidence>
<evidence type="ECO:0000256" key="2">
    <source>
        <dbReference type="SAM" id="MobiDB-lite"/>
    </source>
</evidence>
<evidence type="ECO:0000305" key="3"/>
<keyword id="KW-0488">Methylation</keyword>
<keyword id="KW-0687">Ribonucleoprotein</keyword>
<keyword id="KW-0689">Ribosomal protein</keyword>
<keyword id="KW-0694">RNA-binding</keyword>
<keyword id="KW-0699">rRNA-binding</keyword>
<sequence>MRSGVIAQKLGMTRVYNDAGEHVPVTVLRMENCHVVAQRTVEKNGYTAVQLGVGMAKVKNTSKAMRGHFAKAEVEPKAKLAEFRVSPDNLLEVGVEITAEHFVAGQKVDVTGTSIGKGFAGVMKRHNFGGHRASHGNSITHRSHGSTGQRQDPGKVFKGKKMAGHMGQTRVTTQNIEVVSTDSDRGLILVRGAVPGSKGAWILVRDAVKASLPENAPKPAGLRAGAKAEAAATEGGE</sequence>
<protein>
    <recommendedName>
        <fullName evidence="1">Large ribosomal subunit protein uL3</fullName>
    </recommendedName>
    <alternativeName>
        <fullName evidence="3">50S ribosomal protein L3</fullName>
    </alternativeName>
</protein>
<feature type="chain" id="PRO_0000241323" description="Large ribosomal subunit protein uL3">
    <location>
        <begin position="1"/>
        <end position="237"/>
    </location>
</feature>
<feature type="region of interest" description="Disordered" evidence="2">
    <location>
        <begin position="133"/>
        <end position="155"/>
    </location>
</feature>
<feature type="region of interest" description="Disordered" evidence="2">
    <location>
        <begin position="213"/>
        <end position="237"/>
    </location>
</feature>
<feature type="compositionally biased region" description="Polar residues" evidence="2">
    <location>
        <begin position="135"/>
        <end position="150"/>
    </location>
</feature>
<feature type="compositionally biased region" description="Low complexity" evidence="2">
    <location>
        <begin position="220"/>
        <end position="237"/>
    </location>
</feature>
<feature type="modified residue" description="N5-methylglutamine" evidence="1">
    <location>
        <position position="151"/>
    </location>
</feature>
<proteinExistence type="inferred from homology"/>
<accession>Q57CQ8</accession>
<gene>
    <name evidence="1" type="primary">rplC</name>
    <name type="ordered locus">BruAb1_1238</name>
</gene>